<accession>Q5UPA8</accession>
<reference key="1">
    <citation type="journal article" date="2004" name="Science">
        <title>The 1.2-megabase genome sequence of Mimivirus.</title>
        <authorList>
            <person name="Raoult D."/>
            <person name="Audic S."/>
            <person name="Robert C."/>
            <person name="Abergel C."/>
            <person name="Renesto P."/>
            <person name="Ogata H."/>
            <person name="La Scola B."/>
            <person name="Susan M."/>
            <person name="Claverie J.-M."/>
        </authorList>
    </citation>
    <scope>NUCLEOTIDE SEQUENCE [LARGE SCALE GENOMIC DNA]</scope>
    <source>
        <strain>Rowbotham-Bradford</strain>
    </source>
</reference>
<name>YR029_MIMIV</name>
<sequence length="108" mass="12673">MAKFIDERTFCYKCGMKVSPGIFHRCEKTTSFEPVVSDTYWCAYCKSTIRIIFDGRIRRCSNCGHDLHGGIANKIETVVHRDIESDKMLRRFMDPYSYSSVNKTNDRW</sequence>
<feature type="chain" id="PRO_0000071187" description="Uncharacterized protein R29">
    <location>
        <begin position="1"/>
        <end position="108"/>
    </location>
</feature>
<organismHost>
    <name type="scientific">Acanthamoeba polyphaga</name>
    <name type="common">Amoeba</name>
    <dbReference type="NCBI Taxonomy" id="5757"/>
</organismHost>
<dbReference type="EMBL" id="AY653733">
    <property type="protein sequence ID" value="AAV50304.1"/>
    <property type="molecule type" value="Genomic_DNA"/>
</dbReference>
<dbReference type="KEGG" id="vg:9924607"/>
<dbReference type="OrthoDB" id="38178at10239"/>
<dbReference type="Proteomes" id="UP000001134">
    <property type="component" value="Genome"/>
</dbReference>
<organism>
    <name type="scientific">Acanthamoeba polyphaga mimivirus</name>
    <name type="common">APMV</name>
    <dbReference type="NCBI Taxonomy" id="212035"/>
    <lineage>
        <taxon>Viruses</taxon>
        <taxon>Varidnaviria</taxon>
        <taxon>Bamfordvirae</taxon>
        <taxon>Nucleocytoviricota</taxon>
        <taxon>Megaviricetes</taxon>
        <taxon>Imitervirales</taxon>
        <taxon>Mimiviridae</taxon>
        <taxon>Megamimivirinae</taxon>
        <taxon>Mimivirus</taxon>
        <taxon>Mimivirus bradfordmassiliense</taxon>
    </lineage>
</organism>
<proteinExistence type="predicted"/>
<protein>
    <recommendedName>
        <fullName>Uncharacterized protein R29</fullName>
    </recommendedName>
</protein>
<gene>
    <name type="ordered locus">MIMI_R29</name>
</gene>
<keyword id="KW-1185">Reference proteome</keyword>